<protein>
    <recommendedName>
        <fullName evidence="1">Uridylate kinase</fullName>
        <shortName evidence="1">UK</shortName>
        <ecNumber evidence="1">2.7.4.22</ecNumber>
    </recommendedName>
    <alternativeName>
        <fullName evidence="1">Uridine monophosphate kinase</fullName>
        <shortName evidence="1">UMP kinase</shortName>
        <shortName evidence="1">UMPK</shortName>
    </alternativeName>
</protein>
<dbReference type="EC" id="2.7.4.22" evidence="1"/>
<dbReference type="EMBL" id="AE000782">
    <property type="protein sequence ID" value="AAB89213.1"/>
    <property type="molecule type" value="Genomic_DNA"/>
</dbReference>
<dbReference type="PIR" id="A69505">
    <property type="entry name" value="A69505"/>
</dbReference>
<dbReference type="RefSeq" id="WP_010879534.1">
    <property type="nucleotide sequence ID" value="NC_000917.1"/>
</dbReference>
<dbReference type="PDB" id="2IJ9">
    <property type="method" value="X-ray"/>
    <property type="resolution" value="2.90 A"/>
    <property type="chains" value="A/B=1-219"/>
</dbReference>
<dbReference type="PDBsum" id="2IJ9"/>
<dbReference type="SMR" id="O28237"/>
<dbReference type="STRING" id="224325.AF_2042"/>
<dbReference type="PaxDb" id="224325-AF_2042"/>
<dbReference type="EnsemblBacteria" id="AAB89213">
    <property type="protein sequence ID" value="AAB89213"/>
    <property type="gene ID" value="AF_2042"/>
</dbReference>
<dbReference type="GeneID" id="24795791"/>
<dbReference type="KEGG" id="afu:AF_2042"/>
<dbReference type="eggNOG" id="arCOG00858">
    <property type="taxonomic scope" value="Archaea"/>
</dbReference>
<dbReference type="HOGENOM" id="CLU_079546_0_0_2"/>
<dbReference type="OrthoDB" id="372251at2157"/>
<dbReference type="PhylomeDB" id="O28237"/>
<dbReference type="UniPathway" id="UPA00159">
    <property type="reaction ID" value="UER00275"/>
</dbReference>
<dbReference type="EvolutionaryTrace" id="O28237"/>
<dbReference type="Proteomes" id="UP000002199">
    <property type="component" value="Chromosome"/>
</dbReference>
<dbReference type="GO" id="GO:0005737">
    <property type="term" value="C:cytoplasm"/>
    <property type="evidence" value="ECO:0007669"/>
    <property type="project" value="UniProtKB-SubCell"/>
</dbReference>
<dbReference type="GO" id="GO:0005524">
    <property type="term" value="F:ATP binding"/>
    <property type="evidence" value="ECO:0007669"/>
    <property type="project" value="UniProtKB-KW"/>
</dbReference>
<dbReference type="GO" id="GO:0033862">
    <property type="term" value="F:UMP kinase activity"/>
    <property type="evidence" value="ECO:0007669"/>
    <property type="project" value="UniProtKB-EC"/>
</dbReference>
<dbReference type="GO" id="GO:0044210">
    <property type="term" value="P:'de novo' CTP biosynthetic process"/>
    <property type="evidence" value="ECO:0007669"/>
    <property type="project" value="UniProtKB-UniRule"/>
</dbReference>
<dbReference type="GO" id="GO:0006225">
    <property type="term" value="P:UDP biosynthetic process"/>
    <property type="evidence" value="ECO:0007669"/>
    <property type="project" value="TreeGrafter"/>
</dbReference>
<dbReference type="CDD" id="cd04253">
    <property type="entry name" value="AAK_UMPK-PyrH-Pf"/>
    <property type="match status" value="1"/>
</dbReference>
<dbReference type="Gene3D" id="3.40.1160.10">
    <property type="entry name" value="Acetylglutamate kinase-like"/>
    <property type="match status" value="1"/>
</dbReference>
<dbReference type="HAMAP" id="MF_01220_A">
    <property type="entry name" value="PyrH_A"/>
    <property type="match status" value="1"/>
</dbReference>
<dbReference type="InterPro" id="IPR036393">
    <property type="entry name" value="AceGlu_kinase-like_sf"/>
</dbReference>
<dbReference type="InterPro" id="IPR001048">
    <property type="entry name" value="Asp/Glu/Uridylate_kinase"/>
</dbReference>
<dbReference type="InterPro" id="IPR011817">
    <property type="entry name" value="Uridylate_kinase"/>
</dbReference>
<dbReference type="InterPro" id="IPR011818">
    <property type="entry name" value="Uridylate_kinase_arch/spir"/>
</dbReference>
<dbReference type="NCBIfam" id="TIGR02076">
    <property type="entry name" value="pyrH_arch"/>
    <property type="match status" value="1"/>
</dbReference>
<dbReference type="PANTHER" id="PTHR42833">
    <property type="entry name" value="URIDYLATE KINASE"/>
    <property type="match status" value="1"/>
</dbReference>
<dbReference type="PANTHER" id="PTHR42833:SF4">
    <property type="entry name" value="URIDYLATE KINASE PUMPKIN, CHLOROPLASTIC"/>
    <property type="match status" value="1"/>
</dbReference>
<dbReference type="Pfam" id="PF00696">
    <property type="entry name" value="AA_kinase"/>
    <property type="match status" value="1"/>
</dbReference>
<dbReference type="PIRSF" id="PIRSF005650">
    <property type="entry name" value="Uridylate_kin"/>
    <property type="match status" value="1"/>
</dbReference>
<dbReference type="SUPFAM" id="SSF53633">
    <property type="entry name" value="Carbamate kinase-like"/>
    <property type="match status" value="1"/>
</dbReference>
<name>PYRH_ARCFU</name>
<evidence type="ECO:0000255" key="1">
    <source>
        <dbReference type="HAMAP-Rule" id="MF_01220"/>
    </source>
</evidence>
<evidence type="ECO:0007829" key="2">
    <source>
        <dbReference type="PDB" id="2IJ9"/>
    </source>
</evidence>
<feature type="chain" id="PRO_0000143914" description="Uridylate kinase">
    <location>
        <begin position="1"/>
        <end position="219"/>
    </location>
</feature>
<feature type="binding site" evidence="1">
    <location>
        <begin position="9"/>
        <end position="10"/>
    </location>
    <ligand>
        <name>ATP</name>
        <dbReference type="ChEBI" id="CHEBI:30616"/>
    </ligand>
</feature>
<feature type="binding site" evidence="1">
    <location>
        <position position="41"/>
    </location>
    <ligand>
        <name>UMP</name>
        <dbReference type="ChEBI" id="CHEBI:57865"/>
    </ligand>
</feature>
<feature type="binding site" evidence="1">
    <location>
        <position position="42"/>
    </location>
    <ligand>
        <name>ATP</name>
        <dbReference type="ChEBI" id="CHEBI:30616"/>
    </ligand>
</feature>
<feature type="binding site" evidence="1">
    <location>
        <position position="46"/>
    </location>
    <ligand>
        <name>ATP</name>
        <dbReference type="ChEBI" id="CHEBI:30616"/>
    </ligand>
</feature>
<feature type="binding site" evidence="1">
    <location>
        <position position="63"/>
    </location>
    <ligand>
        <name>UMP</name>
        <dbReference type="ChEBI" id="CHEBI:57865"/>
    </ligand>
</feature>
<feature type="binding site" evidence="1">
    <location>
        <begin position="110"/>
        <end position="116"/>
    </location>
    <ligand>
        <name>UMP</name>
        <dbReference type="ChEBI" id="CHEBI:57865"/>
    </ligand>
</feature>
<feature type="binding site" evidence="1">
    <location>
        <position position="136"/>
    </location>
    <ligand>
        <name>ATP</name>
        <dbReference type="ChEBI" id="CHEBI:30616"/>
    </ligand>
</feature>
<feature type="binding site" evidence="1">
    <location>
        <position position="137"/>
    </location>
    <ligand>
        <name>ATP</name>
        <dbReference type="ChEBI" id="CHEBI:30616"/>
    </ligand>
</feature>
<feature type="binding site" evidence="1">
    <location>
        <position position="142"/>
    </location>
    <ligand>
        <name>ATP</name>
        <dbReference type="ChEBI" id="CHEBI:30616"/>
    </ligand>
</feature>
<feature type="binding site" evidence="1">
    <location>
        <position position="145"/>
    </location>
    <ligand>
        <name>ATP</name>
        <dbReference type="ChEBI" id="CHEBI:30616"/>
    </ligand>
</feature>
<feature type="strand" evidence="2">
    <location>
        <begin position="2"/>
        <end position="7"/>
    </location>
</feature>
<feature type="turn" evidence="2">
    <location>
        <begin position="11"/>
        <end position="14"/>
    </location>
</feature>
<feature type="helix" evidence="2">
    <location>
        <begin position="16"/>
        <end position="32"/>
    </location>
</feature>
<feature type="strand" evidence="2">
    <location>
        <begin position="33"/>
        <end position="39"/>
    </location>
</feature>
<feature type="helix" evidence="2">
    <location>
        <begin position="42"/>
        <end position="54"/>
    </location>
</feature>
<feature type="helix" evidence="2">
    <location>
        <begin position="59"/>
        <end position="80"/>
    </location>
</feature>
<feature type="helix" evidence="2">
    <location>
        <begin position="92"/>
        <end position="99"/>
    </location>
</feature>
<feature type="strand" evidence="2">
    <location>
        <begin position="103"/>
        <end position="107"/>
    </location>
</feature>
<feature type="strand" evidence="2">
    <location>
        <begin position="111"/>
        <end position="114"/>
    </location>
</feature>
<feature type="helix" evidence="2">
    <location>
        <begin position="117"/>
        <end position="126"/>
    </location>
</feature>
<feature type="strand" evidence="2">
    <location>
        <begin position="130"/>
        <end position="140"/>
    </location>
</feature>
<feature type="strand" evidence="2">
    <location>
        <begin position="147"/>
        <end position="151"/>
    </location>
</feature>
<feature type="strand" evidence="2">
    <location>
        <begin position="156"/>
        <end position="158"/>
    </location>
</feature>
<feature type="helix" evidence="2">
    <location>
        <begin position="160"/>
        <end position="166"/>
    </location>
</feature>
<feature type="helix" evidence="2">
    <location>
        <begin position="182"/>
        <end position="191"/>
    </location>
</feature>
<feature type="strand" evidence="2">
    <location>
        <begin position="195"/>
        <end position="199"/>
    </location>
</feature>
<feature type="helix" evidence="2">
    <location>
        <begin position="202"/>
        <end position="209"/>
    </location>
</feature>
<feature type="strand" evidence="2">
    <location>
        <begin position="215"/>
        <end position="218"/>
    </location>
</feature>
<accession>O28237</accession>
<proteinExistence type="evidence at protein level"/>
<gene>
    <name evidence="1" type="primary">pyrH</name>
    <name type="ordered locus">AF_2042</name>
</gene>
<organism>
    <name type="scientific">Archaeoglobus fulgidus (strain ATCC 49558 / DSM 4304 / JCM 9628 / NBRC 100126 / VC-16)</name>
    <dbReference type="NCBI Taxonomy" id="224325"/>
    <lineage>
        <taxon>Archaea</taxon>
        <taxon>Methanobacteriati</taxon>
        <taxon>Methanobacteriota</taxon>
        <taxon>Archaeoglobi</taxon>
        <taxon>Archaeoglobales</taxon>
        <taxon>Archaeoglobaceae</taxon>
        <taxon>Archaeoglobus</taxon>
    </lineage>
</organism>
<keyword id="KW-0002">3D-structure</keyword>
<keyword id="KW-0067">ATP-binding</keyword>
<keyword id="KW-0963">Cytoplasm</keyword>
<keyword id="KW-0418">Kinase</keyword>
<keyword id="KW-0547">Nucleotide-binding</keyword>
<keyword id="KW-0665">Pyrimidine biosynthesis</keyword>
<keyword id="KW-1185">Reference proteome</keyword>
<keyword id="KW-0808">Transferase</keyword>
<comment type="function">
    <text evidence="1">Catalyzes the reversible phosphorylation of UMP to UDP.</text>
</comment>
<comment type="catalytic activity">
    <reaction evidence="1">
        <text>UMP + ATP = UDP + ADP</text>
        <dbReference type="Rhea" id="RHEA:24400"/>
        <dbReference type="ChEBI" id="CHEBI:30616"/>
        <dbReference type="ChEBI" id="CHEBI:57865"/>
        <dbReference type="ChEBI" id="CHEBI:58223"/>
        <dbReference type="ChEBI" id="CHEBI:456216"/>
        <dbReference type="EC" id="2.7.4.22"/>
    </reaction>
</comment>
<comment type="activity regulation">
    <text evidence="1">Inhibited by UTP.</text>
</comment>
<comment type="pathway">
    <text evidence="1">Pyrimidine metabolism; CTP biosynthesis via de novo pathway; UDP from UMP (UMPK route): step 1/1.</text>
</comment>
<comment type="subunit">
    <text evidence="1">Homohexamer.</text>
</comment>
<comment type="subcellular location">
    <subcellularLocation>
        <location evidence="1">Cytoplasm</location>
    </subcellularLocation>
</comment>
<comment type="similarity">
    <text evidence="1">Belongs to the UMP kinase family.</text>
</comment>
<reference key="1">
    <citation type="journal article" date="1997" name="Nature">
        <title>The complete genome sequence of the hyperthermophilic, sulphate-reducing archaeon Archaeoglobus fulgidus.</title>
        <authorList>
            <person name="Klenk H.-P."/>
            <person name="Clayton R.A."/>
            <person name="Tomb J.-F."/>
            <person name="White O."/>
            <person name="Nelson K.E."/>
            <person name="Ketchum K.A."/>
            <person name="Dodson R.J."/>
            <person name="Gwinn M.L."/>
            <person name="Hickey E.K."/>
            <person name="Peterson J.D."/>
            <person name="Richardson D.L."/>
            <person name="Kerlavage A.R."/>
            <person name="Graham D.E."/>
            <person name="Kyrpides N.C."/>
            <person name="Fleischmann R.D."/>
            <person name="Quackenbush J."/>
            <person name="Lee N.H."/>
            <person name="Sutton G.G."/>
            <person name="Gill S.R."/>
            <person name="Kirkness E.F."/>
            <person name="Dougherty B.A."/>
            <person name="McKenney K."/>
            <person name="Adams M.D."/>
            <person name="Loftus B.J."/>
            <person name="Peterson S.N."/>
            <person name="Reich C.I."/>
            <person name="McNeil L.K."/>
            <person name="Badger J.H."/>
            <person name="Glodek A."/>
            <person name="Zhou L."/>
            <person name="Overbeek R."/>
            <person name="Gocayne J.D."/>
            <person name="Weidman J.F."/>
            <person name="McDonald L.A."/>
            <person name="Utterback T.R."/>
            <person name="Cotton M.D."/>
            <person name="Spriggs T."/>
            <person name="Artiach P."/>
            <person name="Kaine B.P."/>
            <person name="Sykes S.M."/>
            <person name="Sadow P.W."/>
            <person name="D'Andrea K.P."/>
            <person name="Bowman C."/>
            <person name="Fujii C."/>
            <person name="Garland S.A."/>
            <person name="Mason T.M."/>
            <person name="Olsen G.J."/>
            <person name="Fraser C.M."/>
            <person name="Smith H.O."/>
            <person name="Woese C.R."/>
            <person name="Venter J.C."/>
        </authorList>
    </citation>
    <scope>NUCLEOTIDE SEQUENCE [LARGE SCALE GENOMIC DNA]</scope>
    <source>
        <strain>ATCC 49558 / DSM 4304 / JCM 9628 / NBRC 100126 / VC-16</strain>
    </source>
</reference>
<reference key="2">
    <citation type="submission" date="2006-10" db="PDB data bank">
        <title>Crystal structure of uridylate kinase from Archaeoglobus fulgidus.</title>
        <authorList>
            <consortium name="New York structural genomics research consortium (NYSGRC)"/>
        </authorList>
    </citation>
    <scope>X-RAY CRYSTALLOGRAPHY (2.9 ANGSTROMS)</scope>
</reference>
<sequence length="219" mass="23398">MKVVLSLGGSVLSNESEKIREFAKTIESVAQQNQVFVVVGGGKLAREYIKRARELGASETFCDYIGIAATRLNAMLLISAIPSAAKKVPVDFMEAEELSKLYRVVVMGGTFPGHTTDATAALLAEFIKADVFINATNVDGVYSADPKSDTSAVKYDRLSPQQLVEIVSRSSAKAGTNVVIDLLAAKIIERSKIKTYVILGTPENIMKAVKGEAVGTVIA</sequence>